<comment type="function">
    <text evidence="4">Hydrolyzes the glucosidic bonds of unbranched Glc residues in tamarind seed xyloglucan, producing XXXG, XLXG, XXLG and XLLG. May have a dual endo- and exo- mode of action towards xyloglucan, or may have an endo-processive mode of action.</text>
</comment>
<comment type="biophysicochemical properties">
    <phDependence>
        <text evidence="4">Optimum pH is 6.0-6.5. Stable between pH 5.0 and 7.5.</text>
    </phDependence>
    <temperatureDependence>
        <text evidence="4">Optimum temperature is 60-70 degrees Celsius. Stable up to 55 degrees Celsius.</text>
    </temperatureDependence>
</comment>
<comment type="similarity">
    <text evidence="4">Belongs to the glycosyl hydrolase 74 family.</text>
</comment>
<protein>
    <recommendedName>
        <fullName evidence="6">Xyloglucanase</fullName>
        <ecNumber>3.2.1.-</ecNumber>
    </recommendedName>
</protein>
<accession>Q3MUH7</accession>
<gene>
    <name evidence="6" type="primary">xeg74</name>
</gene>
<evidence type="ECO:0000250" key="1">
    <source>
        <dbReference type="UniProtKB" id="Q70DK5"/>
    </source>
</evidence>
<evidence type="ECO:0000255" key="2"/>
<evidence type="ECO:0000255" key="3">
    <source>
        <dbReference type="PROSITE-ProRule" id="PRU00513"/>
    </source>
</evidence>
<evidence type="ECO:0000269" key="4">
    <source>
    </source>
</evidence>
<evidence type="ECO:0000305" key="5"/>
<evidence type="ECO:0000312" key="6">
    <source>
        <dbReference type="EMBL" id="BAE44527.1"/>
    </source>
</evidence>
<keyword id="KW-0119">Carbohydrate metabolism</keyword>
<keyword id="KW-0136">Cellulose degradation</keyword>
<keyword id="KW-0903">Direct protein sequencing</keyword>
<keyword id="KW-0326">Glycosidase</keyword>
<keyword id="KW-0378">Hydrolase</keyword>
<keyword id="KW-0624">Polysaccharide degradation</keyword>
<keyword id="KW-0677">Repeat</keyword>
<keyword id="KW-0732">Signal</keyword>
<organism>
    <name type="scientific">Paenibacillus sp</name>
    <dbReference type="NCBI Taxonomy" id="58172"/>
    <lineage>
        <taxon>Bacteria</taxon>
        <taxon>Bacillati</taxon>
        <taxon>Bacillota</taxon>
        <taxon>Bacilli</taxon>
        <taxon>Bacillales</taxon>
        <taxon>Paenibacillaceae</taxon>
        <taxon>Paenibacillus</taxon>
    </lineage>
</organism>
<name>XG74_PAESP</name>
<reference evidence="5 6" key="1">
    <citation type="journal article" date="2005" name="Appl. Environ. Microbiol.">
        <title>Cloning and characterization of two xyloglucanases from Paenibacillus sp. strain KM21.</title>
        <authorList>
            <person name="Yaoi K."/>
            <person name="Nakai T."/>
            <person name="Kameda Y."/>
            <person name="Hiyoshi A."/>
            <person name="Mitsuishi Y."/>
        </authorList>
    </citation>
    <scope>NUCLEOTIDE SEQUENCE [GENOMIC DNA]</scope>
    <scope>PROTEIN SEQUENCE OF 33-52; 380-394 AND 455-469</scope>
    <scope>FUNCTION</scope>
    <scope>BIOPHYSICOCHEMICAL PROPERTIES</scope>
    <source>
        <strain evidence="6">KM21</strain>
    </source>
</reference>
<dbReference type="EC" id="3.2.1.-"/>
<dbReference type="EMBL" id="AB212090">
    <property type="protein sequence ID" value="BAE44527.1"/>
    <property type="molecule type" value="Genomic_DNA"/>
</dbReference>
<dbReference type="SMR" id="Q3MUH7"/>
<dbReference type="CAZy" id="CBM3">
    <property type="family name" value="Carbohydrate-Binding Module Family 3"/>
</dbReference>
<dbReference type="CAZy" id="GH74">
    <property type="family name" value="Glycoside Hydrolase Family 74"/>
</dbReference>
<dbReference type="KEGG" id="ag:BAE44527"/>
<dbReference type="BRENDA" id="3.2.1.151">
    <property type="organism ID" value="6850"/>
</dbReference>
<dbReference type="BRENDA" id="3.2.1.155">
    <property type="organism ID" value="6850"/>
</dbReference>
<dbReference type="SABIO-RK" id="Q3MUH7"/>
<dbReference type="GO" id="GO:0030248">
    <property type="term" value="F:cellulose binding"/>
    <property type="evidence" value="ECO:0007669"/>
    <property type="project" value="InterPro"/>
</dbReference>
<dbReference type="GO" id="GO:0016798">
    <property type="term" value="F:hydrolase activity, acting on glycosyl bonds"/>
    <property type="evidence" value="ECO:0007669"/>
    <property type="project" value="UniProtKB-KW"/>
</dbReference>
<dbReference type="GO" id="GO:0030245">
    <property type="term" value="P:cellulose catabolic process"/>
    <property type="evidence" value="ECO:0007669"/>
    <property type="project" value="UniProtKB-KW"/>
</dbReference>
<dbReference type="GO" id="GO:0010411">
    <property type="term" value="P:xyloglucan metabolic process"/>
    <property type="evidence" value="ECO:0007669"/>
    <property type="project" value="TreeGrafter"/>
</dbReference>
<dbReference type="CDD" id="cd15482">
    <property type="entry name" value="Sialidase_non-viral"/>
    <property type="match status" value="1"/>
</dbReference>
<dbReference type="FunFam" id="2.130.10.10:FF:000534">
    <property type="entry name" value="Xyloglucanase Xgh74A"/>
    <property type="match status" value="1"/>
</dbReference>
<dbReference type="FunFam" id="2.130.10.10:FF:000545">
    <property type="entry name" value="Xyloglucanase Xgh74A"/>
    <property type="match status" value="1"/>
</dbReference>
<dbReference type="Gene3D" id="2.60.40.710">
    <property type="entry name" value="Endoglucanase-like"/>
    <property type="match status" value="1"/>
</dbReference>
<dbReference type="Gene3D" id="2.60.40.10">
    <property type="entry name" value="Immunoglobulins"/>
    <property type="match status" value="1"/>
</dbReference>
<dbReference type="Gene3D" id="2.130.10.10">
    <property type="entry name" value="YVTN repeat-like/Quinoprotein amine dehydrogenase"/>
    <property type="match status" value="2"/>
</dbReference>
<dbReference type="InterPro" id="IPR005102">
    <property type="entry name" value="Carbo-bd_X2"/>
</dbReference>
<dbReference type="InterPro" id="IPR008965">
    <property type="entry name" value="CBM2/CBM3_carb-bd_dom_sf"/>
</dbReference>
<dbReference type="InterPro" id="IPR001956">
    <property type="entry name" value="CBM3"/>
</dbReference>
<dbReference type="InterPro" id="IPR036966">
    <property type="entry name" value="CBM3_sf"/>
</dbReference>
<dbReference type="InterPro" id="IPR013783">
    <property type="entry name" value="Ig-like_fold"/>
</dbReference>
<dbReference type="InterPro" id="IPR014756">
    <property type="entry name" value="Ig_E-set"/>
</dbReference>
<dbReference type="InterPro" id="IPR015943">
    <property type="entry name" value="WD40/YVTN_repeat-like_dom_sf"/>
</dbReference>
<dbReference type="InterPro" id="IPR052025">
    <property type="entry name" value="Xyloglucanase_GH74"/>
</dbReference>
<dbReference type="PANTHER" id="PTHR43739:SF2">
    <property type="entry name" value="OLIGOXYLOGLUCAN-REDUCING END-SPECIFIC XYLOGLUCANASE-RELATED"/>
    <property type="match status" value="1"/>
</dbReference>
<dbReference type="PANTHER" id="PTHR43739">
    <property type="entry name" value="XYLOGLUCANASE (EUROFUNG)"/>
    <property type="match status" value="1"/>
</dbReference>
<dbReference type="Pfam" id="PF00942">
    <property type="entry name" value="CBM_3"/>
    <property type="match status" value="1"/>
</dbReference>
<dbReference type="Pfam" id="PF03442">
    <property type="entry name" value="CBM_X2"/>
    <property type="match status" value="1"/>
</dbReference>
<dbReference type="SMART" id="SM01067">
    <property type="entry name" value="CBM_3"/>
    <property type="match status" value="1"/>
</dbReference>
<dbReference type="SUPFAM" id="SSF49384">
    <property type="entry name" value="Carbohydrate-binding domain"/>
    <property type="match status" value="1"/>
</dbReference>
<dbReference type="SUPFAM" id="SSF81296">
    <property type="entry name" value="E set domains"/>
    <property type="match status" value="1"/>
</dbReference>
<dbReference type="SUPFAM" id="SSF110296">
    <property type="entry name" value="Oligoxyloglucan reducing end-specific cellobiohydrolase"/>
    <property type="match status" value="2"/>
</dbReference>
<dbReference type="PROSITE" id="PS51172">
    <property type="entry name" value="CBM3"/>
    <property type="match status" value="1"/>
</dbReference>
<sequence>MKTFLGKKLWMASLAVALAAGSFAALPEMTSAAPSEPYTWKNVVTGAGGGFVPGIIFNESEKDLIYARTDIGGAYRWNPANESWIPLTDFVGWDDWNKNGVDALATDPVDPDRVYLAVGTYTNSWDKNNGAILRSTDRGDTWQTTTLPFKVGGNMPGRSMGERLVVDPNDNRILYFGARSGNGLWRSSDYGATWSKVTSFPNPGTYVQDPANEYGSDIVGLAWITFDKSSGQVGQATQTIYVGVADTAQSIYRSTDGGATWTAVPGQPTGYLPHHGVLDADGSLYITYSNGVGPYDGTKGDVWKLNTSTGAWTNISPIPSSSADNYFGYGGLAVDAQEPGTLMVATLNSWWPDAILFRSKDGGTTWTRIWEFDGYPNRKFRYTQNISAAPWLTFGTTPAPPEVSPKLGWMIGDLEIDPFDSDRMMYGTGATIYGTNNLTNWDNNEKIDISVMAKGVEEMAVLDLVSPPSGAHLVSGLGDVNGFRHDDLDQPPAKMFSSPNYASTESLDFAELNPSTMVRVGKADYAADPNAKSIGLSSDGGTNWYKANAEPAGTAGGGTVAISSDGSKLVWSTSDKGVHYSSTGGNSWTASTGIPAQAKVISDRVNPNKFYGFAAGKIYVSVNGGVSFSQTAAAGLPVDGNADLDAVPGVEGELWFAGGNEDGGPYGLWHSTDSGASFAKLSNVEEADSIGFGKAAPGRNSAALYAVAQIDGTRGFFRSDDGGASWVRINDDAHQYARVTTITGDPRIYGRVYLGTNGRGILYADPVGGNNGGETPPVSHSGISPQSTEFDLNADRQADIPVALTLNGNTLASIRNGNHVLVQGSDYTMSGSQVFLSKTYLATLSKGVQSLVFRFSAGNDATLSITVKDTTQVPLPEGSIRIEMYNGTTSATANSINPKFKLTNTGTAPLQLADVNIRYYYTIDGEKPLNFFCDWATAGSANVTGTFSALPAAVNGADHVLEIGFTASAGTLAAGQSTEVQVRFSKTDWTNFTQTDDYSFAASSTAYENWSKVTGYVSGTLQWGIEP</sequence>
<feature type="signal peptide" evidence="4">
    <location>
        <begin position="1"/>
        <end position="32"/>
    </location>
</feature>
<feature type="chain" id="PRO_0000395872" description="Xyloglucanase" evidence="4">
    <location>
        <begin position="33"/>
        <end position="1027"/>
    </location>
</feature>
<feature type="repeat" description="BNR 1" evidence="2">
    <location>
        <begin position="134"/>
        <end position="143"/>
    </location>
</feature>
<feature type="repeat" description="BNR 2" evidence="2">
    <location>
        <begin position="185"/>
        <end position="196"/>
    </location>
</feature>
<feature type="repeat" description="BNR 3" evidence="2">
    <location>
        <begin position="252"/>
        <end position="262"/>
    </location>
</feature>
<feature type="repeat" description="BNR 4" evidence="2">
    <location>
        <begin position="357"/>
        <end position="367"/>
    </location>
</feature>
<feature type="repeat" description="BNR 5" evidence="2">
    <location>
        <begin position="537"/>
        <end position="545"/>
    </location>
</feature>
<feature type="repeat" description="BNR 6" evidence="2">
    <location>
        <begin position="717"/>
        <end position="727"/>
    </location>
</feature>
<feature type="domain" description="CBM3" evidence="3">
    <location>
        <begin position="876"/>
        <end position="1027"/>
    </location>
</feature>
<feature type="active site" description="Nucleophile" evidence="1">
    <location>
        <position position="70"/>
    </location>
</feature>
<feature type="active site" description="Proton donor" evidence="1">
    <location>
        <position position="479"/>
    </location>
</feature>
<proteinExistence type="evidence at protein level"/>